<reference key="1">
    <citation type="journal article" date="1993" name="Nucleic Acids Res.">
        <title>Plant cDNA homologue to rat insulinoma gene encoding ribosomal protein S15.</title>
        <authorList>
            <person name="Kidou S."/>
            <person name="Umeda N."/>
            <person name="Kato A."/>
            <person name="Uchimiya H."/>
        </authorList>
    </citation>
    <scope>NUCLEOTIDE SEQUENCE [MRNA]</scope>
</reference>
<reference key="2">
    <citation type="journal article" date="2005" name="Nature">
        <title>The map-based sequence of the rice genome.</title>
        <authorList>
            <consortium name="International rice genome sequencing project (IRGSP)"/>
        </authorList>
    </citation>
    <scope>NUCLEOTIDE SEQUENCE [LARGE SCALE GENOMIC DNA]</scope>
    <source>
        <strain>cv. Nipponbare</strain>
    </source>
</reference>
<reference key="3">
    <citation type="journal article" date="2013" name="Rice">
        <title>Improvement of the Oryza sativa Nipponbare reference genome using next generation sequence and optical map data.</title>
        <authorList>
            <person name="Kawahara Y."/>
            <person name="de la Bastide M."/>
            <person name="Hamilton J.P."/>
            <person name="Kanamori H."/>
            <person name="McCombie W.R."/>
            <person name="Ouyang S."/>
            <person name="Schwartz D.C."/>
            <person name="Tanaka T."/>
            <person name="Wu J."/>
            <person name="Zhou S."/>
            <person name="Childs K.L."/>
            <person name="Davidson R.M."/>
            <person name="Lin H."/>
            <person name="Quesada-Ocampo L."/>
            <person name="Vaillancourt B."/>
            <person name="Sakai H."/>
            <person name="Lee S.S."/>
            <person name="Kim J."/>
            <person name="Numa H."/>
            <person name="Itoh T."/>
            <person name="Buell C.R."/>
            <person name="Matsumoto T."/>
        </authorList>
    </citation>
    <scope>GENOME REANNOTATION</scope>
    <source>
        <strain>cv. Nipponbare</strain>
    </source>
</reference>
<name>RS15_ORYSJ</name>
<organism>
    <name type="scientific">Oryza sativa subsp. japonica</name>
    <name type="common">Rice</name>
    <dbReference type="NCBI Taxonomy" id="39947"/>
    <lineage>
        <taxon>Eukaryota</taxon>
        <taxon>Viridiplantae</taxon>
        <taxon>Streptophyta</taxon>
        <taxon>Embryophyta</taxon>
        <taxon>Tracheophyta</taxon>
        <taxon>Spermatophyta</taxon>
        <taxon>Magnoliopsida</taxon>
        <taxon>Liliopsida</taxon>
        <taxon>Poales</taxon>
        <taxon>Poaceae</taxon>
        <taxon>BOP clade</taxon>
        <taxon>Oryzoideae</taxon>
        <taxon>Oryzeae</taxon>
        <taxon>Oryzinae</taxon>
        <taxon>Oryza</taxon>
        <taxon>Oryza sativa</taxon>
    </lineage>
</organism>
<comment type="similarity">
    <text evidence="1">Belongs to the universal ribosomal protein uS19 family.</text>
</comment>
<comment type="sequence caution" evidence="1">
    <conflict type="frameshift">
        <sequence resource="EMBL-CDS" id="BAA01746"/>
    </conflict>
</comment>
<comment type="sequence caution" evidence="1">
    <conflict type="erroneous gene model prediction">
        <sequence resource="EMBL-CDS" id="BAD30388"/>
    </conflict>
</comment>
<proteinExistence type="evidence at transcript level"/>
<evidence type="ECO:0000305" key="1"/>
<feature type="chain" id="PRO_0000130046" description="Small ribosomal subunit protein uS19">
    <location>
        <begin position="1"/>
        <end position="154"/>
    </location>
</feature>
<feature type="sequence conflict" description="In Ref. 1; BAA01746." evidence="1" ref="1">
    <original>DA</original>
    <variation>E</variation>
    <location>
        <begin position="32"/>
        <end position="33"/>
    </location>
</feature>
<keyword id="KW-1185">Reference proteome</keyword>
<keyword id="KW-0687">Ribonucleoprotein</keyword>
<keyword id="KW-0689">Ribosomal protein</keyword>
<gene>
    <name type="primary">RPS15</name>
    <name type="ordered locus">Os07g0184300</name>
    <name type="ordered locus">LOC_Os07g08660</name>
    <name type="ORF">OJ1046_F10.119</name>
</gene>
<dbReference type="EMBL" id="D10962">
    <property type="protein sequence ID" value="BAA01746.1"/>
    <property type="status" value="ALT_FRAME"/>
    <property type="molecule type" value="mRNA"/>
</dbReference>
<dbReference type="EMBL" id="AP003861">
    <property type="protein sequence ID" value="BAD30388.1"/>
    <property type="status" value="ALT_SEQ"/>
    <property type="molecule type" value="Genomic_DNA"/>
</dbReference>
<dbReference type="EMBL" id="AP014963">
    <property type="status" value="NOT_ANNOTATED_CDS"/>
    <property type="molecule type" value="Genomic_DNA"/>
</dbReference>
<dbReference type="PIR" id="T03388">
    <property type="entry name" value="T03388"/>
</dbReference>
<dbReference type="RefSeq" id="XP_015647750.1">
    <property type="nucleotide sequence ID" value="XM_015792264.1"/>
</dbReference>
<dbReference type="SMR" id="P31674"/>
<dbReference type="FunCoup" id="P31674">
    <property type="interactions" value="2291"/>
</dbReference>
<dbReference type="STRING" id="39947.P31674"/>
<dbReference type="PaxDb" id="39947-P31674"/>
<dbReference type="eggNOG" id="KOG0898">
    <property type="taxonomic scope" value="Eukaryota"/>
</dbReference>
<dbReference type="InParanoid" id="P31674"/>
<dbReference type="OrthoDB" id="748094at2759"/>
<dbReference type="Proteomes" id="UP000000763">
    <property type="component" value="Chromosome 7"/>
</dbReference>
<dbReference type="Proteomes" id="UP000059680">
    <property type="component" value="Chromosome 7"/>
</dbReference>
<dbReference type="GO" id="GO:0022627">
    <property type="term" value="C:cytosolic small ribosomal subunit"/>
    <property type="evidence" value="ECO:0000318"/>
    <property type="project" value="GO_Central"/>
</dbReference>
<dbReference type="GO" id="GO:0003723">
    <property type="term" value="F:RNA binding"/>
    <property type="evidence" value="ECO:0007669"/>
    <property type="project" value="InterPro"/>
</dbReference>
<dbReference type="GO" id="GO:0003735">
    <property type="term" value="F:structural constituent of ribosome"/>
    <property type="evidence" value="ECO:0000318"/>
    <property type="project" value="GO_Central"/>
</dbReference>
<dbReference type="GO" id="GO:0000028">
    <property type="term" value="P:ribosomal small subunit assembly"/>
    <property type="evidence" value="ECO:0000318"/>
    <property type="project" value="GO_Central"/>
</dbReference>
<dbReference type="GO" id="GO:0006412">
    <property type="term" value="P:translation"/>
    <property type="evidence" value="ECO:0007669"/>
    <property type="project" value="InterPro"/>
</dbReference>
<dbReference type="FunFam" id="3.30.860.10:FF:000002">
    <property type="entry name" value="40S ribosomal protein S15"/>
    <property type="match status" value="1"/>
</dbReference>
<dbReference type="Gene3D" id="3.30.860.10">
    <property type="entry name" value="30s Ribosomal Protein S19, Chain A"/>
    <property type="match status" value="1"/>
</dbReference>
<dbReference type="HAMAP" id="MF_00531">
    <property type="entry name" value="Ribosomal_uS19"/>
    <property type="match status" value="1"/>
</dbReference>
<dbReference type="InterPro" id="IPR002222">
    <property type="entry name" value="Ribosomal_uS19"/>
</dbReference>
<dbReference type="InterPro" id="IPR020934">
    <property type="entry name" value="Ribosomal_uS19_CS"/>
</dbReference>
<dbReference type="InterPro" id="IPR005713">
    <property type="entry name" value="Ribosomal_uS19_euk/arc"/>
</dbReference>
<dbReference type="InterPro" id="IPR023575">
    <property type="entry name" value="Ribosomal_uS19_SF"/>
</dbReference>
<dbReference type="NCBIfam" id="NF003121">
    <property type="entry name" value="PRK04038.1"/>
    <property type="match status" value="1"/>
</dbReference>
<dbReference type="NCBIfam" id="TIGR01025">
    <property type="entry name" value="uS19_arch"/>
    <property type="match status" value="1"/>
</dbReference>
<dbReference type="PANTHER" id="PTHR11880">
    <property type="entry name" value="RIBOSOMAL PROTEIN S19P FAMILY MEMBER"/>
    <property type="match status" value="1"/>
</dbReference>
<dbReference type="PANTHER" id="PTHR11880:SF68">
    <property type="entry name" value="SMALL RIBOSOMAL SUBUNIT PROTEIN US19"/>
    <property type="match status" value="1"/>
</dbReference>
<dbReference type="Pfam" id="PF00203">
    <property type="entry name" value="Ribosomal_S19"/>
    <property type="match status" value="1"/>
</dbReference>
<dbReference type="PIRSF" id="PIRSF002144">
    <property type="entry name" value="Ribosomal_S19"/>
    <property type="match status" value="1"/>
</dbReference>
<dbReference type="PRINTS" id="PR00975">
    <property type="entry name" value="RIBOSOMALS19"/>
</dbReference>
<dbReference type="SUPFAM" id="SSF54570">
    <property type="entry name" value="Ribosomal protein S19"/>
    <property type="match status" value="1"/>
</dbReference>
<dbReference type="PROSITE" id="PS00323">
    <property type="entry name" value="RIBOSOMAL_S19"/>
    <property type="match status" value="1"/>
</dbReference>
<accession>P31674</accession>
<accession>Q69W22</accession>
<protein>
    <recommendedName>
        <fullName evidence="1">Small ribosomal subunit protein uS19</fullName>
    </recommendedName>
    <alternativeName>
        <fullName>40S ribosomal protein S15</fullName>
    </alternativeName>
</protein>
<sequence>MADVEVETEVAAGAQPKKRTFRKYSYRGVDLDALLDMSTDDLVQLFPARARRRFQRGLKRKPMALIKKLRKAKKDAPAGEKPEPVRTHLRNMIIVPEMIGSIVGVYNGKTFNQVEIKPEMIGHYLAEFSISYKPVKHGRPGIGATHSSRFIPLK</sequence>